<evidence type="ECO:0000255" key="1">
    <source>
        <dbReference type="PROSITE-ProRule" id="PRU00274"/>
    </source>
</evidence>
<evidence type="ECO:0000256" key="2">
    <source>
        <dbReference type="SAM" id="MobiDB-lite"/>
    </source>
</evidence>
<reference key="1">
    <citation type="journal article" date="1997" name="Comp. Biochem. Physiol.">
        <title>Purification and characterization of an SDS-activated fibrinolytic enzyme from Eisenia fetida.</title>
        <authorList>
            <person name="Yang J.-S."/>
            <person name="Ru B.-G."/>
        </authorList>
    </citation>
    <scope>PROTEIN SEQUENCE</scope>
</reference>
<accession>P81802</accession>
<comment type="function">
    <text>Cleaves the carboxyl side of basic amino acids, small neutral amino acids, and Met residue. It is also a plasminogen activator.</text>
</comment>
<comment type="subunit">
    <text>Heterodimer of a large and a small subunit held together by hydrophobic interactions.</text>
</comment>
<comment type="miscellaneous">
    <text>Activated by sodium dodecyl sulfate (SDS).</text>
</comment>
<comment type="similarity">
    <text evidence="1">Belongs to the peptidase S1 family.</text>
</comment>
<proteinExistence type="evidence at protein level"/>
<keyword id="KW-0903">Direct protein sequencing</keyword>
<keyword id="KW-0378">Hydrolase</keyword>
<keyword id="KW-0645">Protease</keyword>
<keyword id="KW-0720">Serine protease</keyword>
<protein>
    <recommendedName>
        <fullName>Fibrinolytic enzyme large subunit</fullName>
        <ecNumber>3.4.-.-</ecNumber>
    </recommendedName>
</protein>
<sequence length="25" mass="2684">VIGGTNASPGEIPWQLSQQRQSGSW</sequence>
<name>FIBR_EISFE</name>
<dbReference type="EC" id="3.4.-.-"/>
<dbReference type="SMR" id="P81802"/>
<dbReference type="GO" id="GO:0016787">
    <property type="term" value="F:hydrolase activity"/>
    <property type="evidence" value="ECO:0000314"/>
    <property type="project" value="UniProtKB"/>
</dbReference>
<dbReference type="GO" id="GO:0008236">
    <property type="term" value="F:serine-type peptidase activity"/>
    <property type="evidence" value="ECO:0007669"/>
    <property type="project" value="UniProtKB-KW"/>
</dbReference>
<dbReference type="GO" id="GO:0042730">
    <property type="term" value="P:fibrinolysis"/>
    <property type="evidence" value="ECO:0000314"/>
    <property type="project" value="UniProtKB"/>
</dbReference>
<dbReference type="GO" id="GO:0006508">
    <property type="term" value="P:proteolysis"/>
    <property type="evidence" value="ECO:0007669"/>
    <property type="project" value="UniProtKB-KW"/>
</dbReference>
<organism>
    <name type="scientific">Eisenia fetida</name>
    <name type="common">Red wiggler worm</name>
    <dbReference type="NCBI Taxonomy" id="6396"/>
    <lineage>
        <taxon>Eukaryota</taxon>
        <taxon>Metazoa</taxon>
        <taxon>Spiralia</taxon>
        <taxon>Lophotrochozoa</taxon>
        <taxon>Annelida</taxon>
        <taxon>Clitellata</taxon>
        <taxon>Oligochaeta</taxon>
        <taxon>Crassiclitellata</taxon>
        <taxon>Lumbricina</taxon>
        <taxon>Lumbricidae</taxon>
        <taxon>Lumbricinae</taxon>
        <taxon>Eisenia</taxon>
    </lineage>
</organism>
<feature type="chain" id="PRO_0000088687" description="Fibrinolytic enzyme large subunit">
    <location>
        <begin position="1"/>
        <end position="25" status="greater than"/>
    </location>
</feature>
<feature type="domain" description="Peptidase S1" evidence="1">
    <location>
        <begin position="1"/>
        <end position="25" status="greater than"/>
    </location>
</feature>
<feature type="region of interest" description="Disordered" evidence="2">
    <location>
        <begin position="1"/>
        <end position="25"/>
    </location>
</feature>
<feature type="compositionally biased region" description="Polar residues" evidence="2">
    <location>
        <begin position="15"/>
        <end position="25"/>
    </location>
</feature>
<feature type="non-terminal residue">
    <location>
        <position position="25"/>
    </location>
</feature>